<reference key="1">
    <citation type="journal article" date="2006" name="Appl. Environ. Microbiol.">
        <title>Genome sequence of the chemolithoautotrophic nitrite-oxidizing bacterium Nitrobacter winogradskyi Nb-255.</title>
        <authorList>
            <person name="Starkenburg S.R."/>
            <person name="Chain P.S.G."/>
            <person name="Sayavedra-Soto L.A."/>
            <person name="Hauser L."/>
            <person name="Land M.L."/>
            <person name="Larimer F.W."/>
            <person name="Malfatti S.A."/>
            <person name="Klotz M.G."/>
            <person name="Bottomley P.J."/>
            <person name="Arp D.J."/>
            <person name="Hickey W.J."/>
        </authorList>
    </citation>
    <scope>NUCLEOTIDE SEQUENCE [LARGE SCALE GENOMIC DNA]</scope>
    <source>
        <strain>ATCC 25391 / DSM 10237 / CIP 104748 / NCIMB 11846 / Nb-255</strain>
    </source>
</reference>
<keyword id="KW-0227">DNA damage</keyword>
<keyword id="KW-0234">DNA repair</keyword>
<keyword id="KW-1185">Reference proteome</keyword>
<proteinExistence type="inferred from homology"/>
<protein>
    <recommendedName>
        <fullName evidence="1">DNA mismatch repair protein MutL</fullName>
    </recommendedName>
</protein>
<gene>
    <name evidence="1" type="primary">mutL</name>
    <name type="ordered locus">Nwi_2548</name>
</gene>
<comment type="function">
    <text evidence="1">This protein is involved in the repair of mismatches in DNA. It is required for dam-dependent methyl-directed DNA mismatch repair. May act as a 'molecular matchmaker', a protein that promotes the formation of a stable complex between two or more DNA-binding proteins in an ATP-dependent manner without itself being part of a final effector complex.</text>
</comment>
<comment type="similarity">
    <text evidence="1">Belongs to the DNA mismatch repair MutL/HexB family.</text>
</comment>
<accession>Q3SPJ0</accession>
<sequence length="603" mass="65288">MPVRQLPETVVNRIAAGEVVERPASVVKELVENAIDAGATRIDVFTDGGGRRRIGVTDDGAGMAKGDLALAVDRHATSKLDDEDLLGIRTLGFRGEALPSIGAVARLCITTREAREPHAWSLTVEGGRKSEIIPAALTNGTRVEVGDLFYATPARLKFLKTDRTEAEAIREVVRRLAMARPDIGFTLAGEERAPVTWTAALPGAAGRLTRLGDILGGDFRAAAIPVRAEREGVIVEGFAAAPSLTRANALGQYLFVNGRPVRDKLILGAVRAAYSDYLPRDRHPVAALFVTADPREVDANVHPAKTEVRFRNAGLVRALIVHALKEGLAREGRRTAANRDGAVLTAFRPAPSPRPANWDWRESPAAPADARPWIGGPPAAAFAEAGQAALDVGAPSADVRFDAHPPLDLVDRPLGAARTQIHETYIVSQTRDGLIVVDQHAAHERIVYERLKTALARDGVQRQILLIPDIVELDEATVEKLIDRATELEKFGLAIESFGPGAVAVRETPSLLGKINAAALLRDLAEHMTEWEETLPLERRLMHVAATMACHGSVRAGRILKPEEMNALLREMEATPNSGQCNHGRPTYVELKLDDIEKLFGRR</sequence>
<dbReference type="EMBL" id="CP000115">
    <property type="protein sequence ID" value="ABA05801.1"/>
    <property type="molecule type" value="Genomic_DNA"/>
</dbReference>
<dbReference type="RefSeq" id="WP_011315752.1">
    <property type="nucleotide sequence ID" value="NC_007406.1"/>
</dbReference>
<dbReference type="SMR" id="Q3SPJ0"/>
<dbReference type="STRING" id="323098.Nwi_2548"/>
<dbReference type="KEGG" id="nwi:Nwi_2548"/>
<dbReference type="eggNOG" id="COG0323">
    <property type="taxonomic scope" value="Bacteria"/>
</dbReference>
<dbReference type="HOGENOM" id="CLU_004131_4_2_5"/>
<dbReference type="OrthoDB" id="9763467at2"/>
<dbReference type="Proteomes" id="UP000002531">
    <property type="component" value="Chromosome"/>
</dbReference>
<dbReference type="GO" id="GO:0032300">
    <property type="term" value="C:mismatch repair complex"/>
    <property type="evidence" value="ECO:0007669"/>
    <property type="project" value="InterPro"/>
</dbReference>
<dbReference type="GO" id="GO:0005524">
    <property type="term" value="F:ATP binding"/>
    <property type="evidence" value="ECO:0007669"/>
    <property type="project" value="InterPro"/>
</dbReference>
<dbReference type="GO" id="GO:0016887">
    <property type="term" value="F:ATP hydrolysis activity"/>
    <property type="evidence" value="ECO:0007669"/>
    <property type="project" value="InterPro"/>
</dbReference>
<dbReference type="GO" id="GO:0140664">
    <property type="term" value="F:ATP-dependent DNA damage sensor activity"/>
    <property type="evidence" value="ECO:0007669"/>
    <property type="project" value="InterPro"/>
</dbReference>
<dbReference type="GO" id="GO:0030983">
    <property type="term" value="F:mismatched DNA binding"/>
    <property type="evidence" value="ECO:0007669"/>
    <property type="project" value="InterPro"/>
</dbReference>
<dbReference type="GO" id="GO:0006298">
    <property type="term" value="P:mismatch repair"/>
    <property type="evidence" value="ECO:0007669"/>
    <property type="project" value="UniProtKB-UniRule"/>
</dbReference>
<dbReference type="CDD" id="cd16926">
    <property type="entry name" value="HATPase_MutL-MLH-PMS-like"/>
    <property type="match status" value="1"/>
</dbReference>
<dbReference type="CDD" id="cd00782">
    <property type="entry name" value="MutL_Trans"/>
    <property type="match status" value="1"/>
</dbReference>
<dbReference type="FunFam" id="3.30.565.10:FF:000003">
    <property type="entry name" value="DNA mismatch repair endonuclease MutL"/>
    <property type="match status" value="1"/>
</dbReference>
<dbReference type="Gene3D" id="3.30.230.10">
    <property type="match status" value="1"/>
</dbReference>
<dbReference type="Gene3D" id="3.30.565.10">
    <property type="entry name" value="Histidine kinase-like ATPase, C-terminal domain"/>
    <property type="match status" value="1"/>
</dbReference>
<dbReference type="Gene3D" id="3.30.1540.20">
    <property type="entry name" value="MutL, C-terminal domain, dimerisation subdomain"/>
    <property type="match status" value="1"/>
</dbReference>
<dbReference type="Gene3D" id="3.30.1370.100">
    <property type="entry name" value="MutL, C-terminal domain, regulatory subdomain"/>
    <property type="match status" value="1"/>
</dbReference>
<dbReference type="HAMAP" id="MF_00149">
    <property type="entry name" value="DNA_mis_repair"/>
    <property type="match status" value="1"/>
</dbReference>
<dbReference type="InterPro" id="IPR014762">
    <property type="entry name" value="DNA_mismatch_repair_CS"/>
</dbReference>
<dbReference type="InterPro" id="IPR020667">
    <property type="entry name" value="DNA_mismatch_repair_MutL"/>
</dbReference>
<dbReference type="InterPro" id="IPR013507">
    <property type="entry name" value="DNA_mismatch_S5_2-like"/>
</dbReference>
<dbReference type="InterPro" id="IPR036890">
    <property type="entry name" value="HATPase_C_sf"/>
</dbReference>
<dbReference type="InterPro" id="IPR002099">
    <property type="entry name" value="MutL/Mlh/PMS"/>
</dbReference>
<dbReference type="InterPro" id="IPR038973">
    <property type="entry name" value="MutL/Mlh/Pms-like"/>
</dbReference>
<dbReference type="InterPro" id="IPR014790">
    <property type="entry name" value="MutL_C"/>
</dbReference>
<dbReference type="InterPro" id="IPR042120">
    <property type="entry name" value="MutL_C_dimsub"/>
</dbReference>
<dbReference type="InterPro" id="IPR042121">
    <property type="entry name" value="MutL_C_regsub"/>
</dbReference>
<dbReference type="InterPro" id="IPR037198">
    <property type="entry name" value="MutL_C_sf"/>
</dbReference>
<dbReference type="InterPro" id="IPR020568">
    <property type="entry name" value="Ribosomal_Su5_D2-typ_SF"/>
</dbReference>
<dbReference type="InterPro" id="IPR014721">
    <property type="entry name" value="Ribsml_uS5_D2-typ_fold_subgr"/>
</dbReference>
<dbReference type="NCBIfam" id="TIGR00585">
    <property type="entry name" value="mutl"/>
    <property type="match status" value="1"/>
</dbReference>
<dbReference type="NCBIfam" id="NF000953">
    <property type="entry name" value="PRK00095.2-4"/>
    <property type="match status" value="1"/>
</dbReference>
<dbReference type="PANTHER" id="PTHR10073">
    <property type="entry name" value="DNA MISMATCH REPAIR PROTEIN MLH, PMS, MUTL"/>
    <property type="match status" value="1"/>
</dbReference>
<dbReference type="PANTHER" id="PTHR10073:SF12">
    <property type="entry name" value="DNA MISMATCH REPAIR PROTEIN MLH1"/>
    <property type="match status" value="1"/>
</dbReference>
<dbReference type="Pfam" id="PF01119">
    <property type="entry name" value="DNA_mis_repair"/>
    <property type="match status" value="1"/>
</dbReference>
<dbReference type="Pfam" id="PF13589">
    <property type="entry name" value="HATPase_c_3"/>
    <property type="match status" value="1"/>
</dbReference>
<dbReference type="Pfam" id="PF08676">
    <property type="entry name" value="MutL_C"/>
    <property type="match status" value="1"/>
</dbReference>
<dbReference type="SMART" id="SM01340">
    <property type="entry name" value="DNA_mis_repair"/>
    <property type="match status" value="1"/>
</dbReference>
<dbReference type="SMART" id="SM00853">
    <property type="entry name" value="MutL_C"/>
    <property type="match status" value="1"/>
</dbReference>
<dbReference type="SUPFAM" id="SSF55874">
    <property type="entry name" value="ATPase domain of HSP90 chaperone/DNA topoisomerase II/histidine kinase"/>
    <property type="match status" value="1"/>
</dbReference>
<dbReference type="SUPFAM" id="SSF118116">
    <property type="entry name" value="DNA mismatch repair protein MutL"/>
    <property type="match status" value="1"/>
</dbReference>
<dbReference type="SUPFAM" id="SSF54211">
    <property type="entry name" value="Ribosomal protein S5 domain 2-like"/>
    <property type="match status" value="1"/>
</dbReference>
<dbReference type="PROSITE" id="PS00058">
    <property type="entry name" value="DNA_MISMATCH_REPAIR_1"/>
    <property type="match status" value="1"/>
</dbReference>
<evidence type="ECO:0000255" key="1">
    <source>
        <dbReference type="HAMAP-Rule" id="MF_00149"/>
    </source>
</evidence>
<feature type="chain" id="PRO_1000010050" description="DNA mismatch repair protein MutL">
    <location>
        <begin position="1"/>
        <end position="603"/>
    </location>
</feature>
<organism>
    <name type="scientific">Nitrobacter winogradskyi (strain ATCC 25391 / DSM 10237 / CIP 104748 / NCIMB 11846 / Nb-255)</name>
    <dbReference type="NCBI Taxonomy" id="323098"/>
    <lineage>
        <taxon>Bacteria</taxon>
        <taxon>Pseudomonadati</taxon>
        <taxon>Pseudomonadota</taxon>
        <taxon>Alphaproteobacteria</taxon>
        <taxon>Hyphomicrobiales</taxon>
        <taxon>Nitrobacteraceae</taxon>
        <taxon>Nitrobacter</taxon>
    </lineage>
</organism>
<name>MUTL_NITWN</name>